<protein>
    <recommendedName>
        <fullName>Temptin</fullName>
    </recommendedName>
</protein>
<organism>
    <name type="scientific">Aplysia californica</name>
    <name type="common">California sea hare</name>
    <dbReference type="NCBI Taxonomy" id="6500"/>
    <lineage>
        <taxon>Eukaryota</taxon>
        <taxon>Metazoa</taxon>
        <taxon>Spiralia</taxon>
        <taxon>Lophotrochozoa</taxon>
        <taxon>Mollusca</taxon>
        <taxon>Gastropoda</taxon>
        <taxon>Heterobranchia</taxon>
        <taxon>Euthyneura</taxon>
        <taxon>Tectipleura</taxon>
        <taxon>Aplysiida</taxon>
        <taxon>Aplysioidea</taxon>
        <taxon>Aplysiidae</taxon>
        <taxon>Aplysia</taxon>
    </lineage>
</organism>
<keyword id="KW-0903">Direct protein sequencing</keyword>
<keyword id="KW-1015">Disulfide bond</keyword>
<keyword id="KW-0588">Pheromone</keyword>
<keyword id="KW-0964">Secreted</keyword>
<keyword id="KW-0732">Signal</keyword>
<proteinExistence type="evidence at protein level"/>
<sequence>MEQKRTLRVFLAVSLLCALANAYPQYQAVIPNGSSVPNPCNTSQIAQGVGHINFQGTGPLNPFGEDFKAAGKQWTTDLCDMDSDGDGRSNGVELGDPECVWSQGETPARTTDLSHPGFDEATVSC</sequence>
<reference key="1">
    <citation type="journal article" date="2004" name="J. Biol. Chem.">
        <title>Characterization of Aplysia enticin and temptin, two novel water-borne protein pheromones that act in concert with attractin to stimulate mate attraction.</title>
        <authorList>
            <person name="Cummins S.F."/>
            <person name="Nichols A.E."/>
            <person name="Amare A."/>
            <person name="Hummon A.B."/>
            <person name="Sweedler J.V."/>
            <person name="Nagle G.T."/>
        </authorList>
    </citation>
    <scope>NUCLEOTIDE SEQUENCE [MRNA]</scope>
    <scope>PROTEIN SEQUENCE OF 23-28; 73-77 AND 89-93</scope>
    <scope>FUNCTION</scope>
    <scope>TISSUE SPECIFICITY</scope>
    <scope>INTERACTION WITH ATTRACTIN AND ENTICIN</scope>
    <source>
        <tissue>Albumen gland</tissue>
    </source>
</reference>
<reference key="2">
    <citation type="journal article" date="2007" name="FEBS J.">
        <title>Aplysia temptin -- the 'glue' in the water-borne attractin pheromone complex.</title>
        <authorList>
            <person name="Cummins S.F."/>
            <person name="Xie F."/>
            <person name="de Vries M.R."/>
            <person name="Annangudi S.P."/>
            <person name="Misra M."/>
            <person name="Degnan B.M."/>
            <person name="Sweedler J.V."/>
            <person name="Nagle G.T."/>
            <person name="Schein C.H."/>
        </authorList>
    </citation>
    <scope>PROTEIN SEQUENCE</scope>
    <scope>CIRCULAR DICHROISM ANALYSIS</scope>
    <scope>DISULFIDE BONDS</scope>
    <scope>FUNCTION</scope>
    <scope>IDENTIFICATION BY MASS SPECTROMETRY</scope>
</reference>
<feature type="signal peptide" evidence="2">
    <location>
        <begin position="1"/>
        <end position="22"/>
    </location>
</feature>
<feature type="chain" id="PRO_0000311913" description="Temptin">
    <location>
        <begin position="23"/>
        <end position="125"/>
    </location>
</feature>
<feature type="region of interest" description="Disordered" evidence="1">
    <location>
        <begin position="78"/>
        <end position="125"/>
    </location>
</feature>
<feature type="compositionally biased region" description="Polar residues" evidence="1">
    <location>
        <begin position="103"/>
        <end position="113"/>
    </location>
</feature>
<feature type="disulfide bond" evidence="3">
    <location>
        <begin position="40"/>
        <end position="125"/>
    </location>
</feature>
<feature type="disulfide bond" evidence="3">
    <location>
        <begin position="79"/>
        <end position="99"/>
    </location>
</feature>
<name>TEMPT_APLCA</name>
<evidence type="ECO:0000256" key="1">
    <source>
        <dbReference type="SAM" id="MobiDB-lite"/>
    </source>
</evidence>
<evidence type="ECO:0000269" key="2">
    <source>
    </source>
</evidence>
<evidence type="ECO:0000269" key="3">
    <source>
    </source>
</evidence>
<comment type="function">
    <text evidence="2 3">A component of the complex of water-borne protein pheromones that stimulates attraction and mating behavior. Modulates pheromone signaling by direct binding to attractin.</text>
</comment>
<comment type="subunit">
    <text>Binds to attractin and enticin.</text>
</comment>
<comment type="subcellular location">
    <subcellularLocation>
        <location>Secreted</location>
    </subcellularLocation>
</comment>
<comment type="tissue specificity">
    <text evidence="2">Produced by the albumen gland of the egg cordons.</text>
</comment>
<dbReference type="EMBL" id="AY309079">
    <property type="protein sequence ID" value="AAP73787.1"/>
    <property type="molecule type" value="mRNA"/>
</dbReference>
<dbReference type="RefSeq" id="NP_001191545.1">
    <property type="nucleotide sequence ID" value="NM_001204616.1"/>
</dbReference>
<dbReference type="EnsemblMetazoa" id="NM_001204616.1">
    <property type="protein sequence ID" value="NP_001191545.1"/>
    <property type="gene ID" value="LOC100533318"/>
</dbReference>
<dbReference type="GeneID" id="100533318"/>
<dbReference type="OrthoDB" id="129121at2759"/>
<dbReference type="Proteomes" id="UP000694888">
    <property type="component" value="Unplaced"/>
</dbReference>
<dbReference type="GO" id="GO:0005576">
    <property type="term" value="C:extracellular region"/>
    <property type="evidence" value="ECO:0007669"/>
    <property type="project" value="UniProtKB-SubCell"/>
</dbReference>
<dbReference type="GO" id="GO:0005186">
    <property type="term" value="F:pheromone activity"/>
    <property type="evidence" value="ECO:0007669"/>
    <property type="project" value="UniProtKB-KW"/>
</dbReference>
<dbReference type="InterPro" id="IPR055313">
    <property type="entry name" value="Temptin-like"/>
</dbReference>
<dbReference type="PANTHER" id="PTHR34737">
    <property type="entry name" value="EF-HAND DOMAIN-CONTAINING PROTEIN"/>
    <property type="match status" value="1"/>
</dbReference>
<dbReference type="PANTHER" id="PTHR34737:SF2">
    <property type="entry name" value="EF-HAND DOMAIN-CONTAINING PROTEIN"/>
    <property type="match status" value="1"/>
</dbReference>
<dbReference type="Pfam" id="PF24784">
    <property type="entry name" value="Temptin_C"/>
    <property type="match status" value="1"/>
</dbReference>
<accession>Q7Z0T3</accession>